<reference key="1">
    <citation type="submission" date="2002-12" db="EMBL/GenBank/DDBJ databases">
        <authorList>
            <consortium name="NIH - Xenopus Gene Collection (XGC) project"/>
        </authorList>
    </citation>
    <scope>NUCLEOTIDE SEQUENCE [LARGE SCALE MRNA]</scope>
    <source>
        <tissue>Embryo</tissue>
    </source>
</reference>
<evidence type="ECO:0000250" key="1"/>
<evidence type="ECO:0000305" key="2"/>
<proteinExistence type="inferred from homology"/>
<sequence>MDPGSTASPLQCTAGFPSKNRVAILAELDKEKRKLLLQNQSSTNNPGASIALARPNMNKDFRDHSEQQHIAAQQKAALQHAHAHSSGYFITQDSAFGNLILPVIPRLEAE</sequence>
<dbReference type="EMBL" id="BC041246">
    <property type="protein sequence ID" value="AAH41246.1"/>
    <property type="molecule type" value="mRNA"/>
</dbReference>
<dbReference type="RefSeq" id="NP_001079381.1">
    <property type="nucleotide sequence ID" value="NM_001085912.1"/>
</dbReference>
<dbReference type="SMR" id="Q8AVV6"/>
<dbReference type="DNASU" id="379068"/>
<dbReference type="GeneID" id="379068"/>
<dbReference type="KEGG" id="xla:379068"/>
<dbReference type="AGR" id="Xenbase:XB-GENE-988718"/>
<dbReference type="CTD" id="379068"/>
<dbReference type="Xenbase" id="XB-GENE-988718">
    <property type="gene designation" value="inip.S"/>
</dbReference>
<dbReference type="OrthoDB" id="10040290at2759"/>
<dbReference type="Proteomes" id="UP000186698">
    <property type="component" value="Chromosome 1S"/>
</dbReference>
<dbReference type="Bgee" id="379068">
    <property type="expression patterns" value="Expressed in gastrula and 19 other cell types or tissues"/>
</dbReference>
<dbReference type="GO" id="GO:0005654">
    <property type="term" value="C:nucleoplasm"/>
    <property type="evidence" value="ECO:0000318"/>
    <property type="project" value="GO_Central"/>
</dbReference>
<dbReference type="GO" id="GO:0005634">
    <property type="term" value="C:nucleus"/>
    <property type="evidence" value="ECO:0000250"/>
    <property type="project" value="UniProtKB"/>
</dbReference>
<dbReference type="GO" id="GO:0070876">
    <property type="term" value="C:SOSS complex"/>
    <property type="evidence" value="ECO:0000250"/>
    <property type="project" value="UniProtKB"/>
</dbReference>
<dbReference type="GO" id="GO:0006974">
    <property type="term" value="P:DNA damage response"/>
    <property type="evidence" value="ECO:0000250"/>
    <property type="project" value="UniProtKB"/>
</dbReference>
<dbReference type="GO" id="GO:0006281">
    <property type="term" value="P:DNA repair"/>
    <property type="evidence" value="ECO:0000250"/>
    <property type="project" value="UniProtKB"/>
</dbReference>
<dbReference type="GO" id="GO:0010212">
    <property type="term" value="P:response to ionizing radiation"/>
    <property type="evidence" value="ECO:0000250"/>
    <property type="project" value="UniProtKB"/>
</dbReference>
<dbReference type="InterPro" id="IPR031821">
    <property type="entry name" value="SOSSC"/>
</dbReference>
<dbReference type="PANTHER" id="PTHR31526">
    <property type="entry name" value="SOSS COMPLEX SUBUNIT C"/>
    <property type="match status" value="1"/>
</dbReference>
<dbReference type="PANTHER" id="PTHR31526:SF2">
    <property type="entry name" value="SOSS COMPLEX SUBUNIT C"/>
    <property type="match status" value="1"/>
</dbReference>
<dbReference type="Pfam" id="PF15925">
    <property type="entry name" value="SOSSC"/>
    <property type="match status" value="1"/>
</dbReference>
<gene>
    <name type="primary">inip</name>
    <name type="synonym">ssbip1</name>
</gene>
<protein>
    <recommendedName>
        <fullName>SOSS complex subunit C</fullName>
    </recommendedName>
    <alternativeName>
        <fullName>Sensor of single-strand DNA complex subunit C</fullName>
    </alternativeName>
    <alternativeName>
        <fullName>Sensor of ssDNA subunit C</fullName>
        <shortName>SOSS-C</shortName>
    </alternativeName>
    <alternativeName>
        <fullName>Single-stranded DNA-binding protein-interacting protein 1</fullName>
        <shortName>SSB-interacting protein 1</shortName>
    </alternativeName>
</protein>
<name>SOSSC_XENLA</name>
<keyword id="KW-0227">DNA damage</keyword>
<keyword id="KW-0234">DNA repair</keyword>
<keyword id="KW-0539">Nucleus</keyword>
<keyword id="KW-1185">Reference proteome</keyword>
<organism>
    <name type="scientific">Xenopus laevis</name>
    <name type="common">African clawed frog</name>
    <dbReference type="NCBI Taxonomy" id="8355"/>
    <lineage>
        <taxon>Eukaryota</taxon>
        <taxon>Metazoa</taxon>
        <taxon>Chordata</taxon>
        <taxon>Craniata</taxon>
        <taxon>Vertebrata</taxon>
        <taxon>Euteleostomi</taxon>
        <taxon>Amphibia</taxon>
        <taxon>Batrachia</taxon>
        <taxon>Anura</taxon>
        <taxon>Pipoidea</taxon>
        <taxon>Pipidae</taxon>
        <taxon>Xenopodinae</taxon>
        <taxon>Xenopus</taxon>
        <taxon>Xenopus</taxon>
    </lineage>
</organism>
<feature type="chain" id="PRO_0000279423" description="SOSS complex subunit C">
    <location>
        <begin position="1"/>
        <end position="110"/>
    </location>
</feature>
<comment type="function">
    <text evidence="1">Component of the SOSS complex, a multiprotein complex that functions downstream of the MRN complex to promote DNA repair and G2/M checkpoint. The SOSS complex associates with single-stranded DNA at DNA lesions and influences diverse endpoints in the cellular DNA damage response including cell-cycle checkpoint activation, recombinational repair and maintenance of genomic stability. Required for efficient homologous recombination-dependent repair of double-strand breaks (DSBs) (By similarity).</text>
</comment>
<comment type="subunit">
    <text evidence="1">Belongs to the multiprotein complex Integrator. Component of the SOSS complex, composed of soss-b (soss-b1/nabp2 or soss-b2/nabp1), soss-a/ints3 and soss-c/inip (By similarity).</text>
</comment>
<comment type="subcellular location">
    <subcellularLocation>
        <location evidence="1">Nucleus</location>
    </subcellularLocation>
    <text evidence="1">Localizes to nuclear foci following DNA damage.</text>
</comment>
<comment type="similarity">
    <text evidence="2">Belongs to the SOSS-C family.</text>
</comment>
<accession>Q8AVV6</accession>